<name>DHAS_STRAK</name>
<keyword id="KW-0028">Amino-acid biosynthesis</keyword>
<keyword id="KW-0220">Diaminopimelate biosynthesis</keyword>
<keyword id="KW-0457">Lysine biosynthesis</keyword>
<keyword id="KW-0486">Methionine biosynthesis</keyword>
<keyword id="KW-0521">NADP</keyword>
<keyword id="KW-0560">Oxidoreductase</keyword>
<keyword id="KW-0791">Threonine biosynthesis</keyword>
<protein>
    <recommendedName>
        <fullName evidence="1">Aspartate-semialdehyde dehydrogenase</fullName>
        <shortName evidence="1">ASA dehydrogenase</shortName>
        <shortName evidence="1">ASADH</shortName>
        <ecNumber evidence="1">1.2.1.11</ecNumber>
    </recommendedName>
    <alternativeName>
        <fullName evidence="1">Aspartate-beta-semialdehyde dehydrogenase</fullName>
    </alternativeName>
</protein>
<organism>
    <name type="scientific">Streptomyces akiyoshiensis</name>
    <dbReference type="NCBI Taxonomy" id="40842"/>
    <lineage>
        <taxon>Bacteria</taxon>
        <taxon>Bacillati</taxon>
        <taxon>Actinomycetota</taxon>
        <taxon>Actinomycetes</taxon>
        <taxon>Kitasatosporales</taxon>
        <taxon>Streptomycetaceae</taxon>
        <taxon>Streptomyces</taxon>
    </lineage>
</organism>
<feature type="chain" id="PRO_0000141391" description="Aspartate-semialdehyde dehydrogenase">
    <location>
        <begin position="1"/>
        <end position="338"/>
    </location>
</feature>
<feature type="active site" description="Acyl-thioester intermediate" evidence="1">
    <location>
        <position position="123"/>
    </location>
</feature>
<feature type="active site" description="Proton acceptor" evidence="1">
    <location>
        <position position="249"/>
    </location>
</feature>
<feature type="binding site" evidence="1">
    <location>
        <begin position="9"/>
        <end position="12"/>
    </location>
    <ligand>
        <name>NADP(+)</name>
        <dbReference type="ChEBI" id="CHEBI:58349"/>
    </ligand>
</feature>
<feature type="binding site" evidence="1">
    <location>
        <begin position="37"/>
        <end position="38"/>
    </location>
    <ligand>
        <name>NADP(+)</name>
        <dbReference type="ChEBI" id="CHEBI:58349"/>
    </ligand>
</feature>
<feature type="binding site" evidence="1">
    <location>
        <position position="93"/>
    </location>
    <ligand>
        <name>phosphate</name>
        <dbReference type="ChEBI" id="CHEBI:43474"/>
    </ligand>
</feature>
<feature type="binding site" evidence="1">
    <location>
        <position position="150"/>
    </location>
    <ligand>
        <name>substrate</name>
    </ligand>
</feature>
<feature type="binding site" evidence="1">
    <location>
        <begin position="153"/>
        <end position="154"/>
    </location>
    <ligand>
        <name>NADP(+)</name>
        <dbReference type="ChEBI" id="CHEBI:58349"/>
    </ligand>
</feature>
<feature type="binding site" evidence="1">
    <location>
        <position position="220"/>
    </location>
    <ligand>
        <name>phosphate</name>
        <dbReference type="ChEBI" id="CHEBI:43474"/>
    </ligand>
</feature>
<feature type="binding site" evidence="1">
    <location>
        <position position="242"/>
    </location>
    <ligand>
        <name>substrate</name>
    </ligand>
</feature>
<feature type="binding site" evidence="1">
    <location>
        <position position="316"/>
    </location>
    <ligand>
        <name>NADP(+)</name>
        <dbReference type="ChEBI" id="CHEBI:58349"/>
    </ligand>
</feature>
<proteinExistence type="inferred from homology"/>
<dbReference type="EC" id="1.2.1.11" evidence="1"/>
<dbReference type="EMBL" id="U29446">
    <property type="protein sequence ID" value="AAC44053.1"/>
    <property type="molecule type" value="Genomic_DNA"/>
</dbReference>
<dbReference type="SMR" id="Q53612"/>
<dbReference type="UniPathway" id="UPA00034">
    <property type="reaction ID" value="UER00016"/>
</dbReference>
<dbReference type="UniPathway" id="UPA00050">
    <property type="reaction ID" value="UER00463"/>
</dbReference>
<dbReference type="UniPathway" id="UPA00051">
    <property type="reaction ID" value="UER00464"/>
</dbReference>
<dbReference type="GO" id="GO:0004073">
    <property type="term" value="F:aspartate-semialdehyde dehydrogenase activity"/>
    <property type="evidence" value="ECO:0007669"/>
    <property type="project" value="UniProtKB-UniRule"/>
</dbReference>
<dbReference type="GO" id="GO:0051287">
    <property type="term" value="F:NAD binding"/>
    <property type="evidence" value="ECO:0007669"/>
    <property type="project" value="InterPro"/>
</dbReference>
<dbReference type="GO" id="GO:0050661">
    <property type="term" value="F:NADP binding"/>
    <property type="evidence" value="ECO:0007669"/>
    <property type="project" value="UniProtKB-UniRule"/>
</dbReference>
<dbReference type="GO" id="GO:0046983">
    <property type="term" value="F:protein dimerization activity"/>
    <property type="evidence" value="ECO:0007669"/>
    <property type="project" value="InterPro"/>
</dbReference>
<dbReference type="GO" id="GO:0071266">
    <property type="term" value="P:'de novo' L-methionine biosynthetic process"/>
    <property type="evidence" value="ECO:0007669"/>
    <property type="project" value="UniProtKB-UniRule"/>
</dbReference>
<dbReference type="GO" id="GO:0019877">
    <property type="term" value="P:diaminopimelate biosynthetic process"/>
    <property type="evidence" value="ECO:0007669"/>
    <property type="project" value="UniProtKB-UniRule"/>
</dbReference>
<dbReference type="GO" id="GO:0009097">
    <property type="term" value="P:isoleucine biosynthetic process"/>
    <property type="evidence" value="ECO:0007669"/>
    <property type="project" value="InterPro"/>
</dbReference>
<dbReference type="GO" id="GO:0009089">
    <property type="term" value="P:lysine biosynthetic process via diaminopimelate"/>
    <property type="evidence" value="ECO:0007669"/>
    <property type="project" value="UniProtKB-UniRule"/>
</dbReference>
<dbReference type="GO" id="GO:0009088">
    <property type="term" value="P:threonine biosynthetic process"/>
    <property type="evidence" value="ECO:0007669"/>
    <property type="project" value="UniProtKB-UniRule"/>
</dbReference>
<dbReference type="CDD" id="cd18131">
    <property type="entry name" value="ASADH_C_bac_euk_like"/>
    <property type="match status" value="1"/>
</dbReference>
<dbReference type="CDD" id="cd02316">
    <property type="entry name" value="VcASADH2_like_N"/>
    <property type="match status" value="1"/>
</dbReference>
<dbReference type="Gene3D" id="3.30.360.10">
    <property type="entry name" value="Dihydrodipicolinate Reductase, domain 2"/>
    <property type="match status" value="1"/>
</dbReference>
<dbReference type="Gene3D" id="3.40.50.720">
    <property type="entry name" value="NAD(P)-binding Rossmann-like Domain"/>
    <property type="match status" value="1"/>
</dbReference>
<dbReference type="HAMAP" id="MF_02121">
    <property type="entry name" value="ASADH"/>
    <property type="match status" value="1"/>
</dbReference>
<dbReference type="InterPro" id="IPR000319">
    <property type="entry name" value="Asp-semialdehyde_DH_CS"/>
</dbReference>
<dbReference type="InterPro" id="IPR012080">
    <property type="entry name" value="Asp_semialdehyde_DH"/>
</dbReference>
<dbReference type="InterPro" id="IPR005986">
    <property type="entry name" value="Asp_semialdehyde_DH_beta"/>
</dbReference>
<dbReference type="InterPro" id="IPR036291">
    <property type="entry name" value="NAD(P)-bd_dom_sf"/>
</dbReference>
<dbReference type="InterPro" id="IPR000534">
    <property type="entry name" value="Semialdehyde_DH_NAD-bd"/>
</dbReference>
<dbReference type="InterPro" id="IPR012280">
    <property type="entry name" value="Semialdhyde_DH_dimer_dom"/>
</dbReference>
<dbReference type="NCBIfam" id="TIGR01296">
    <property type="entry name" value="asd_B"/>
    <property type="match status" value="1"/>
</dbReference>
<dbReference type="NCBIfam" id="NF011456">
    <property type="entry name" value="PRK14874.1"/>
    <property type="match status" value="1"/>
</dbReference>
<dbReference type="PANTHER" id="PTHR46278:SF2">
    <property type="entry name" value="ASPARTATE-SEMIALDEHYDE DEHYDROGENASE"/>
    <property type="match status" value="1"/>
</dbReference>
<dbReference type="PANTHER" id="PTHR46278">
    <property type="entry name" value="DEHYDROGENASE, PUTATIVE-RELATED"/>
    <property type="match status" value="1"/>
</dbReference>
<dbReference type="Pfam" id="PF01118">
    <property type="entry name" value="Semialdhyde_dh"/>
    <property type="match status" value="1"/>
</dbReference>
<dbReference type="Pfam" id="PF02774">
    <property type="entry name" value="Semialdhyde_dhC"/>
    <property type="match status" value="1"/>
</dbReference>
<dbReference type="PIRSF" id="PIRSF000148">
    <property type="entry name" value="ASA_dh"/>
    <property type="match status" value="1"/>
</dbReference>
<dbReference type="SMART" id="SM00859">
    <property type="entry name" value="Semialdhyde_dh"/>
    <property type="match status" value="1"/>
</dbReference>
<dbReference type="SUPFAM" id="SSF55347">
    <property type="entry name" value="Glyceraldehyde-3-phosphate dehydrogenase-like, C-terminal domain"/>
    <property type="match status" value="1"/>
</dbReference>
<dbReference type="SUPFAM" id="SSF51735">
    <property type="entry name" value="NAD(P)-binding Rossmann-fold domains"/>
    <property type="match status" value="1"/>
</dbReference>
<dbReference type="PROSITE" id="PS01103">
    <property type="entry name" value="ASD"/>
    <property type="match status" value="1"/>
</dbReference>
<reference key="1">
    <citation type="journal article" date="1996" name="Microbiology">
        <title>Streptomyces akiyoshiensis differs from other Gram-positive bacteria in the organization of a core biosynthetic pathway gene for aspartate family amino acids.</title>
        <authorList>
            <person name="Le Y."/>
            <person name="He J."/>
            <person name="Vining L.C."/>
        </authorList>
    </citation>
    <scope>NUCLEOTIDE SEQUENCE [GENOMIC DNA]</scope>
    <source>
        <strain>ATCC 13480 / H43464 / IFO 3811</strain>
    </source>
</reference>
<sequence>MRVGIVGATGQVGTVMRRILTERNFPVTELRLFASARSAGTELDGVTVEDAATADYTGLDIVLFSAGGATSKALAEKVASQGAVVIDNSSAWRKHPEVPLVVSEVNPHAIKDRPKGIIANPNCTTMAAMPVLRPLHDEAGLEALVVATYQAVSGSGLAGVAELHGQTQKVVADAEKLTHDGEAVDFPEPGVYKRPIAFNVLPLAGSIVDDGLNETDEEQKLRNESRKILEIPGLKVSGTCVRVPVFSGHSLQINARFARPISADGATELLKDAPGVELSDIPTPLQAAGKDPSYVGRIRSDETVDNGLALFVSNDNLRKGAALNAVQIAELVAAELKG</sequence>
<evidence type="ECO:0000255" key="1">
    <source>
        <dbReference type="HAMAP-Rule" id="MF_02121"/>
    </source>
</evidence>
<comment type="function">
    <text evidence="1">Catalyzes the NADPH-dependent formation of L-aspartate-semialdehyde (L-ASA) by the reductive dephosphorylation of L-aspartyl-4-phosphate.</text>
</comment>
<comment type="catalytic activity">
    <reaction evidence="1">
        <text>L-aspartate 4-semialdehyde + phosphate + NADP(+) = 4-phospho-L-aspartate + NADPH + H(+)</text>
        <dbReference type="Rhea" id="RHEA:24284"/>
        <dbReference type="ChEBI" id="CHEBI:15378"/>
        <dbReference type="ChEBI" id="CHEBI:43474"/>
        <dbReference type="ChEBI" id="CHEBI:57535"/>
        <dbReference type="ChEBI" id="CHEBI:57783"/>
        <dbReference type="ChEBI" id="CHEBI:58349"/>
        <dbReference type="ChEBI" id="CHEBI:537519"/>
        <dbReference type="EC" id="1.2.1.11"/>
    </reaction>
</comment>
<comment type="pathway">
    <text evidence="1">Amino-acid biosynthesis; L-lysine biosynthesis via DAP pathway; (S)-tetrahydrodipicolinate from L-aspartate: step 2/4.</text>
</comment>
<comment type="pathway">
    <text evidence="1">Amino-acid biosynthesis; L-methionine biosynthesis via de novo pathway; L-homoserine from L-aspartate: step 2/3.</text>
</comment>
<comment type="pathway">
    <text evidence="1">Amino-acid biosynthesis; L-threonine biosynthesis; L-threonine from L-aspartate: step 2/5.</text>
</comment>
<comment type="subunit">
    <text evidence="1">Homodimer.</text>
</comment>
<comment type="similarity">
    <text evidence="1">Belongs to the aspartate-semialdehyde dehydrogenase family.</text>
</comment>
<accession>Q53612</accession>
<gene>
    <name evidence="1" type="primary">asd</name>
</gene>